<name>T2R30_PANTR</name>
<accession>Q646C1</accession>
<sequence>MITFLPIIFSILIVVIFVIGNFANGFIALVNSIEWVKRQKISFVDQILTALAVSRVGLLWVLLLHWYATQLNPAFYSVEVRITVYNVWAVTNHFSSWLATSLSMFYLLKIANFSNLIFLRIKRRVKSVVLVILLGPLLFLVCHLFVINMDETIWTKEYEGNMTWKIKLRSAMYHSNMTLTMLANFVPLTLTLISFLLLICSLCKHLKKMQLHGKGSQDPSTKVHIKALQTVTSFLLLCAIYFLSMIISVCNLGRLEKQPVFMFCQAIIFSYPSTHPFILILGNKKLKQIFLSVLWHVRYWVKDRSLRLHRFTRAALCKG</sequence>
<gene>
    <name type="primary">TAS2R30</name>
    <name type="synonym">TAS2R47</name>
</gene>
<dbReference type="EMBL" id="AY724876">
    <property type="protein sequence ID" value="AAU21098.1"/>
    <property type="molecule type" value="Genomic_DNA"/>
</dbReference>
<dbReference type="SMR" id="Q646C1"/>
<dbReference type="FunCoup" id="Q646C1">
    <property type="interactions" value="190"/>
</dbReference>
<dbReference type="STRING" id="9598.ENSPTRP00000054702"/>
<dbReference type="GlyCosmos" id="Q646C1">
    <property type="glycosylation" value="2 sites, No reported glycans"/>
</dbReference>
<dbReference type="PaxDb" id="9598-ENSPTRP00000054702"/>
<dbReference type="eggNOG" id="ENOG502TE6U">
    <property type="taxonomic scope" value="Eukaryota"/>
</dbReference>
<dbReference type="InParanoid" id="Q646C1"/>
<dbReference type="Proteomes" id="UP000002277">
    <property type="component" value="Unplaced"/>
</dbReference>
<dbReference type="GO" id="GO:0016020">
    <property type="term" value="C:membrane"/>
    <property type="evidence" value="ECO:0000318"/>
    <property type="project" value="GO_Central"/>
</dbReference>
<dbReference type="GO" id="GO:0005886">
    <property type="term" value="C:plasma membrane"/>
    <property type="evidence" value="ECO:0007669"/>
    <property type="project" value="UniProtKB-ARBA"/>
</dbReference>
<dbReference type="GO" id="GO:0033038">
    <property type="term" value="F:bitter taste receptor activity"/>
    <property type="evidence" value="ECO:0000318"/>
    <property type="project" value="GO_Central"/>
</dbReference>
<dbReference type="GO" id="GO:0004930">
    <property type="term" value="F:G protein-coupled receptor activity"/>
    <property type="evidence" value="ECO:0007669"/>
    <property type="project" value="UniProtKB-KW"/>
</dbReference>
<dbReference type="GO" id="GO:0001580">
    <property type="term" value="P:detection of chemical stimulus involved in sensory perception of bitter taste"/>
    <property type="evidence" value="ECO:0000318"/>
    <property type="project" value="GO_Central"/>
</dbReference>
<dbReference type="CDD" id="cd15027">
    <property type="entry name" value="7tm_TAS2R43-like"/>
    <property type="match status" value="1"/>
</dbReference>
<dbReference type="FunFam" id="1.20.1070.10:FF:000042">
    <property type="entry name" value="Taste receptor type 2 member 7"/>
    <property type="match status" value="1"/>
</dbReference>
<dbReference type="Gene3D" id="1.20.1070.10">
    <property type="entry name" value="Rhodopsin 7-helix transmembrane proteins"/>
    <property type="match status" value="1"/>
</dbReference>
<dbReference type="InterPro" id="IPR007960">
    <property type="entry name" value="TAS2R"/>
</dbReference>
<dbReference type="PANTHER" id="PTHR11394">
    <property type="entry name" value="TASTE RECEPTOR TYPE 2"/>
    <property type="match status" value="1"/>
</dbReference>
<dbReference type="PANTHER" id="PTHR11394:SF48">
    <property type="entry name" value="TASTE RECEPTOR TYPE 2 MEMBER 30"/>
    <property type="match status" value="1"/>
</dbReference>
<dbReference type="Pfam" id="PF05296">
    <property type="entry name" value="TAS2R"/>
    <property type="match status" value="1"/>
</dbReference>
<dbReference type="SUPFAM" id="SSF81321">
    <property type="entry name" value="Family A G protein-coupled receptor-like"/>
    <property type="match status" value="1"/>
</dbReference>
<organism>
    <name type="scientific">Pan troglodytes</name>
    <name type="common">Chimpanzee</name>
    <dbReference type="NCBI Taxonomy" id="9598"/>
    <lineage>
        <taxon>Eukaryota</taxon>
        <taxon>Metazoa</taxon>
        <taxon>Chordata</taxon>
        <taxon>Craniata</taxon>
        <taxon>Vertebrata</taxon>
        <taxon>Euteleostomi</taxon>
        <taxon>Mammalia</taxon>
        <taxon>Eutheria</taxon>
        <taxon>Euarchontoglires</taxon>
        <taxon>Primates</taxon>
        <taxon>Haplorrhini</taxon>
        <taxon>Catarrhini</taxon>
        <taxon>Hominidae</taxon>
        <taxon>Pan</taxon>
    </lineage>
</organism>
<evidence type="ECO:0000250" key="1"/>
<evidence type="ECO:0000255" key="2"/>
<evidence type="ECO:0000305" key="3"/>
<feature type="chain" id="PRO_0000082325" description="Taste receptor type 2 member 30">
    <location>
        <begin position="1"/>
        <end position="319"/>
    </location>
</feature>
<feature type="topological domain" description="Extracellular" evidence="2">
    <location>
        <position position="1"/>
    </location>
</feature>
<feature type="transmembrane region" description="Helical; Name=1" evidence="2">
    <location>
        <begin position="2"/>
        <end position="22"/>
    </location>
</feature>
<feature type="topological domain" description="Cytoplasmic" evidence="2">
    <location>
        <begin position="23"/>
        <end position="46"/>
    </location>
</feature>
<feature type="transmembrane region" description="Helical; Name=2" evidence="2">
    <location>
        <begin position="47"/>
        <end position="67"/>
    </location>
</feature>
<feature type="topological domain" description="Extracellular" evidence="2">
    <location>
        <begin position="68"/>
        <end position="86"/>
    </location>
</feature>
<feature type="transmembrane region" description="Helical; Name=3" evidence="2">
    <location>
        <begin position="87"/>
        <end position="107"/>
    </location>
</feature>
<feature type="topological domain" description="Cytoplasmic" evidence="2">
    <location>
        <begin position="108"/>
        <end position="126"/>
    </location>
</feature>
<feature type="transmembrane region" description="Helical; Name=4" evidence="2">
    <location>
        <begin position="127"/>
        <end position="147"/>
    </location>
</feature>
<feature type="topological domain" description="Extracellular" evidence="2">
    <location>
        <begin position="148"/>
        <end position="178"/>
    </location>
</feature>
<feature type="transmembrane region" description="Helical; Name=5" evidence="2">
    <location>
        <begin position="179"/>
        <end position="199"/>
    </location>
</feature>
<feature type="topological domain" description="Cytoplasmic" evidence="2">
    <location>
        <begin position="200"/>
        <end position="229"/>
    </location>
</feature>
<feature type="transmembrane region" description="Helical; Name=6" evidence="2">
    <location>
        <begin position="230"/>
        <end position="250"/>
    </location>
</feature>
<feature type="topological domain" description="Extracellular" evidence="2">
    <location>
        <begin position="251"/>
        <end position="259"/>
    </location>
</feature>
<feature type="transmembrane region" description="Helical; Name=7" evidence="2">
    <location>
        <begin position="260"/>
        <end position="280"/>
    </location>
</feature>
<feature type="topological domain" description="Cytoplasmic" evidence="2">
    <location>
        <begin position="281"/>
        <end position="319"/>
    </location>
</feature>
<feature type="glycosylation site" description="N-linked (GlcNAc...) asparagine" evidence="2">
    <location>
        <position position="161"/>
    </location>
</feature>
<feature type="glycosylation site" description="N-linked (GlcNAc...) asparagine" evidence="2">
    <location>
        <position position="176"/>
    </location>
</feature>
<comment type="function">
    <text evidence="1">Receptor that may play a role in the perception of bitterness and is gustducin-linked. May play a role in sensing the chemical composition of the gastrointestinal content. The activity of this receptor may stimulate alpha gustducin, mediate PLC-beta-2 activation and lead to the gating of TRPM5 (By similarity).</text>
</comment>
<comment type="subcellular location">
    <subcellularLocation>
        <location>Membrane</location>
        <topology>Multi-pass membrane protein</topology>
    </subcellularLocation>
</comment>
<comment type="miscellaneous">
    <text>Most taste cells may be activated by a limited number of bitter compounds; individual taste cells can discriminate among bitter stimuli.</text>
</comment>
<comment type="similarity">
    <text evidence="3">Belongs to the G-protein coupled receptor T2R family.</text>
</comment>
<proteinExistence type="inferred from homology"/>
<keyword id="KW-0297">G-protein coupled receptor</keyword>
<keyword id="KW-0325">Glycoprotein</keyword>
<keyword id="KW-0472">Membrane</keyword>
<keyword id="KW-0675">Receptor</keyword>
<keyword id="KW-1185">Reference proteome</keyword>
<keyword id="KW-0716">Sensory transduction</keyword>
<keyword id="KW-0919">Taste</keyword>
<keyword id="KW-0807">Transducer</keyword>
<keyword id="KW-0812">Transmembrane</keyword>
<keyword id="KW-1133">Transmembrane helix</keyword>
<protein>
    <recommendedName>
        <fullName>Taste receptor type 2 member 30</fullName>
    </recommendedName>
    <alternativeName>
        <fullName>Taste receptor type 2 member 47</fullName>
        <shortName>T2R47</shortName>
    </alternativeName>
</protein>
<reference key="1">
    <citation type="journal article" date="2005" name="Mol. Biol. Evol.">
        <title>Evolution of bitter taste receptors in humans and apes.</title>
        <authorList>
            <person name="Fischer A."/>
            <person name="Gilad Y."/>
            <person name="Man O."/>
            <person name="Paeaebo S."/>
        </authorList>
    </citation>
    <scope>NUCLEOTIDE SEQUENCE [GENOMIC DNA]</scope>
</reference>